<evidence type="ECO:0000250" key="1">
    <source>
        <dbReference type="UniProtKB" id="Q9ZV57"/>
    </source>
</evidence>
<evidence type="ECO:0000255" key="2"/>
<evidence type="ECO:0000255" key="3">
    <source>
        <dbReference type="PROSITE-ProRule" id="PRU00498"/>
    </source>
</evidence>
<evidence type="ECO:0000256" key="4">
    <source>
        <dbReference type="SAM" id="MobiDB-lite"/>
    </source>
</evidence>
<evidence type="ECO:0000269" key="5">
    <source>
    </source>
</evidence>
<evidence type="ECO:0000303" key="6">
    <source>
    </source>
</evidence>
<evidence type="ECO:0000305" key="7"/>
<evidence type="ECO:0000312" key="8">
    <source>
        <dbReference type="EMBL" id="AAB71448.1"/>
    </source>
</evidence>
<evidence type="ECO:0000312" key="9">
    <source>
        <dbReference type="EMBL" id="AEE27819.1"/>
    </source>
</evidence>
<comment type="subcellular location">
    <subcellularLocation>
        <location evidence="1">Endoplasmic reticulum membrane</location>
        <topology evidence="2">Multi-pass membrane protein</topology>
    </subcellularLocation>
</comment>
<comment type="tissue specificity">
    <text evidence="5">Only expressed in inflorescences.</text>
</comment>
<comment type="similarity">
    <text evidence="7">Belongs to the DESIGUAL family.</text>
</comment>
<accession>O23040</accession>
<proteinExistence type="evidence at transcript level"/>
<keyword id="KW-0217">Developmental protein</keyword>
<keyword id="KW-0256">Endoplasmic reticulum</keyword>
<keyword id="KW-0325">Glycoprotein</keyword>
<keyword id="KW-0472">Membrane</keyword>
<keyword id="KW-1185">Reference proteome</keyword>
<keyword id="KW-0732">Signal</keyword>
<keyword id="KW-0812">Transmembrane</keyword>
<keyword id="KW-1133">Transmembrane helix</keyword>
<organism>
    <name type="scientific">Arabidopsis thaliana</name>
    <name type="common">Mouse-ear cress</name>
    <dbReference type="NCBI Taxonomy" id="3702"/>
    <lineage>
        <taxon>Eukaryota</taxon>
        <taxon>Viridiplantae</taxon>
        <taxon>Streptophyta</taxon>
        <taxon>Embryophyta</taxon>
        <taxon>Tracheophyta</taxon>
        <taxon>Spermatophyta</taxon>
        <taxon>Magnoliopsida</taxon>
        <taxon>eudicotyledons</taxon>
        <taxon>Gunneridae</taxon>
        <taxon>Pentapetalae</taxon>
        <taxon>rosids</taxon>
        <taxon>malvids</taxon>
        <taxon>Brassicales</taxon>
        <taxon>Brassicaceae</taxon>
        <taxon>Camelineae</taxon>
        <taxon>Arabidopsis</taxon>
    </lineage>
</organism>
<protein>
    <recommendedName>
        <fullName evidence="6">Protein DESIGUAL 4</fullName>
    </recommendedName>
</protein>
<gene>
    <name evidence="6" type="primary">DEAL4</name>
    <name evidence="9" type="ordered locus">At1g05291</name>
    <name evidence="8" type="ORF">YUP8H12.9</name>
</gene>
<name>DEAL4_ARATH</name>
<dbReference type="EMBL" id="AC000098">
    <property type="protein sequence ID" value="AAB71448.1"/>
    <property type="molecule type" value="Genomic_DNA"/>
</dbReference>
<dbReference type="EMBL" id="CP002684">
    <property type="protein sequence ID" value="AEE27819.1"/>
    <property type="molecule type" value="Genomic_DNA"/>
</dbReference>
<dbReference type="PIR" id="F86187">
    <property type="entry name" value="F86187"/>
</dbReference>
<dbReference type="RefSeq" id="NP_001117232.1">
    <property type="nucleotide sequence ID" value="NM_001123760.1"/>
</dbReference>
<dbReference type="STRING" id="3702.O23040"/>
<dbReference type="GlyCosmos" id="O23040">
    <property type="glycosylation" value="1 site, No reported glycans"/>
</dbReference>
<dbReference type="GlyGen" id="O23040">
    <property type="glycosylation" value="1 site"/>
</dbReference>
<dbReference type="PaxDb" id="3702-AT1G05291.1"/>
<dbReference type="EnsemblPlants" id="AT1G05291.1">
    <property type="protein sequence ID" value="AT1G05291.1"/>
    <property type="gene ID" value="AT1G05291"/>
</dbReference>
<dbReference type="GeneID" id="6240483"/>
<dbReference type="Gramene" id="AT1G05291.1">
    <property type="protein sequence ID" value="AT1G05291.1"/>
    <property type="gene ID" value="AT1G05291"/>
</dbReference>
<dbReference type="KEGG" id="ath:AT1G05291"/>
<dbReference type="Araport" id="AT1G05291"/>
<dbReference type="TAIR" id="AT1G05291"/>
<dbReference type="HOGENOM" id="CLU_103513_0_0_1"/>
<dbReference type="InParanoid" id="O23040"/>
<dbReference type="OMA" id="WSNRESR"/>
<dbReference type="OrthoDB" id="1084506at2759"/>
<dbReference type="PhylomeDB" id="O23040"/>
<dbReference type="PRO" id="PR:O23040"/>
<dbReference type="Proteomes" id="UP000006548">
    <property type="component" value="Chromosome 1"/>
</dbReference>
<dbReference type="ExpressionAtlas" id="O23040">
    <property type="expression patterns" value="baseline"/>
</dbReference>
<dbReference type="GO" id="GO:0005789">
    <property type="term" value="C:endoplasmic reticulum membrane"/>
    <property type="evidence" value="ECO:0007669"/>
    <property type="project" value="UniProtKB-SubCell"/>
</dbReference>
<dbReference type="InterPro" id="IPR009606">
    <property type="entry name" value="DEAL/Modifying_wall_lignin1/2"/>
</dbReference>
<dbReference type="InterPro" id="IPR052222">
    <property type="entry name" value="DESIGUAL"/>
</dbReference>
<dbReference type="PANTHER" id="PTHR31769">
    <property type="entry name" value="OS07G0462200 PROTEIN-RELATED"/>
    <property type="match status" value="1"/>
</dbReference>
<dbReference type="Pfam" id="PF06749">
    <property type="entry name" value="DUF1218"/>
    <property type="match status" value="1"/>
</dbReference>
<reference key="1">
    <citation type="journal article" date="2000" name="Nature">
        <title>Sequence and analysis of chromosome 1 of the plant Arabidopsis thaliana.</title>
        <authorList>
            <person name="Theologis A."/>
            <person name="Ecker J.R."/>
            <person name="Palm C.J."/>
            <person name="Federspiel N.A."/>
            <person name="Kaul S."/>
            <person name="White O."/>
            <person name="Alonso J."/>
            <person name="Altafi H."/>
            <person name="Araujo R."/>
            <person name="Bowman C.L."/>
            <person name="Brooks S.Y."/>
            <person name="Buehler E."/>
            <person name="Chan A."/>
            <person name="Chao Q."/>
            <person name="Chen H."/>
            <person name="Cheuk R.F."/>
            <person name="Chin C.W."/>
            <person name="Chung M.K."/>
            <person name="Conn L."/>
            <person name="Conway A.B."/>
            <person name="Conway A.R."/>
            <person name="Creasy T.H."/>
            <person name="Dewar K."/>
            <person name="Dunn P."/>
            <person name="Etgu P."/>
            <person name="Feldblyum T.V."/>
            <person name="Feng J.-D."/>
            <person name="Fong B."/>
            <person name="Fujii C.Y."/>
            <person name="Gill J.E."/>
            <person name="Goldsmith A.D."/>
            <person name="Haas B."/>
            <person name="Hansen N.F."/>
            <person name="Hughes B."/>
            <person name="Huizar L."/>
            <person name="Hunter J.L."/>
            <person name="Jenkins J."/>
            <person name="Johnson-Hopson C."/>
            <person name="Khan S."/>
            <person name="Khaykin E."/>
            <person name="Kim C.J."/>
            <person name="Koo H.L."/>
            <person name="Kremenetskaia I."/>
            <person name="Kurtz D.B."/>
            <person name="Kwan A."/>
            <person name="Lam B."/>
            <person name="Langin-Hooper S."/>
            <person name="Lee A."/>
            <person name="Lee J.M."/>
            <person name="Lenz C.A."/>
            <person name="Li J.H."/>
            <person name="Li Y.-P."/>
            <person name="Lin X."/>
            <person name="Liu S.X."/>
            <person name="Liu Z.A."/>
            <person name="Luros J.S."/>
            <person name="Maiti R."/>
            <person name="Marziali A."/>
            <person name="Militscher J."/>
            <person name="Miranda M."/>
            <person name="Nguyen M."/>
            <person name="Nierman W.C."/>
            <person name="Osborne B.I."/>
            <person name="Pai G."/>
            <person name="Peterson J."/>
            <person name="Pham P.K."/>
            <person name="Rizzo M."/>
            <person name="Rooney T."/>
            <person name="Rowley D."/>
            <person name="Sakano H."/>
            <person name="Salzberg S.L."/>
            <person name="Schwartz J.R."/>
            <person name="Shinn P."/>
            <person name="Southwick A.M."/>
            <person name="Sun H."/>
            <person name="Tallon L.J."/>
            <person name="Tambunga G."/>
            <person name="Toriumi M.J."/>
            <person name="Town C.D."/>
            <person name="Utterback T."/>
            <person name="Van Aken S."/>
            <person name="Vaysberg M."/>
            <person name="Vysotskaia V.S."/>
            <person name="Walker M."/>
            <person name="Wu D."/>
            <person name="Yu G."/>
            <person name="Fraser C.M."/>
            <person name="Venter J.C."/>
            <person name="Davis R.W."/>
        </authorList>
    </citation>
    <scope>NUCLEOTIDE SEQUENCE [LARGE SCALE GENOMIC DNA]</scope>
    <source>
        <strain>cv. Columbia</strain>
    </source>
</reference>
<reference key="2">
    <citation type="journal article" date="2017" name="Plant J.">
        <title>Araport11: a complete reannotation of the Arabidopsis thaliana reference genome.</title>
        <authorList>
            <person name="Cheng C.Y."/>
            <person name="Krishnakumar V."/>
            <person name="Chan A.P."/>
            <person name="Thibaud-Nissen F."/>
            <person name="Schobel S."/>
            <person name="Town C.D."/>
        </authorList>
    </citation>
    <scope>GENOME REANNOTATION</scope>
    <source>
        <strain>cv. Columbia</strain>
    </source>
</reference>
<reference key="3">
    <citation type="journal article" date="2018" name="New Phytol.">
        <title>Members of the DEAL subfamily of the DUF1218 gene family are required for bilateral symmetry but not for dorsoventrality in Arabidopsis leaves.</title>
        <authorList>
            <person name="Wilson-Sanchez D."/>
            <person name="Martinez-Lopez S."/>
            <person name="Navarro-Cartagena S."/>
            <person name="Jover-Gil S."/>
            <person name="Micol J.L."/>
        </authorList>
    </citation>
    <scope>TISSUE SPECIFICITY</scope>
    <scope>GENE FAMILY</scope>
    <scope>NOMENCLATURE</scope>
    <source>
        <strain>cv. Columbia</strain>
    </source>
</reference>
<feature type="signal peptide" evidence="2">
    <location>
        <begin position="1"/>
        <end status="unknown"/>
    </location>
</feature>
<feature type="chain" id="PRO_0000454968" description="Protein DESIGUAL 4">
    <location>
        <begin status="unknown"/>
        <end position="204"/>
    </location>
</feature>
<feature type="transmembrane region" description="Helical" evidence="2">
    <location>
        <begin position="13"/>
        <end position="33"/>
    </location>
</feature>
<feature type="transmembrane region" description="Helical" evidence="2">
    <location>
        <begin position="60"/>
        <end position="80"/>
    </location>
</feature>
<feature type="transmembrane region" description="Helical" evidence="2">
    <location>
        <begin position="107"/>
        <end position="127"/>
    </location>
</feature>
<feature type="transmembrane region" description="Helical" evidence="2">
    <location>
        <begin position="143"/>
        <end position="163"/>
    </location>
</feature>
<feature type="region of interest" description="Disordered" evidence="4">
    <location>
        <begin position="177"/>
        <end position="204"/>
    </location>
</feature>
<feature type="glycosylation site" description="N-linked (GlcNAc...) asparagine" evidence="3">
    <location>
        <position position="179"/>
    </location>
</feature>
<sequence length="204" mass="22055">MEEGKGTEKKGCIITVIIVCIVLTVGLDIVAGFVGLQAQAAQQYVKHDKLECKAPSKTAFVLGIIAVSCLATAHVSANVIGCSISNLFQALGALPKNKITTYFNMACLFLIWVVGIFGALILANGIWSNTESRIRCRFTNNHVFSIGGKVCFLHAIVSGIYYISSIVARARHFHRTKPNKTKPSELKPIPTEPNEAEPNSTPNP</sequence>